<protein>
    <recommendedName>
        <fullName evidence="4">Acetyltransferase PA5475</fullName>
        <ecNumber>2.3.1.-</ecNumber>
    </recommendedName>
    <alternativeName>
        <fullName evidence="4">GCN5-related N-acetyltransferase</fullName>
        <shortName evidence="4">GNAT</shortName>
    </alternativeName>
</protein>
<evidence type="ECO:0000250" key="1">
    <source>
        <dbReference type="UniProtKB" id="Q9I0Q8"/>
    </source>
</evidence>
<evidence type="ECO:0000255" key="2">
    <source>
        <dbReference type="PROSITE-ProRule" id="PRU00532"/>
    </source>
</evidence>
<evidence type="ECO:0000269" key="3">
    <source>
    </source>
</evidence>
<evidence type="ECO:0000303" key="4">
    <source>
    </source>
</evidence>
<proteinExistence type="predicted"/>
<organism>
    <name type="scientific">Pseudomonas aeruginosa (strain ATCC 15692 / DSM 22644 / CIP 104116 / JCM 14847 / LMG 12228 / 1C / PRS 101 / PAO1)</name>
    <dbReference type="NCBI Taxonomy" id="208964"/>
    <lineage>
        <taxon>Bacteria</taxon>
        <taxon>Pseudomonadati</taxon>
        <taxon>Pseudomonadota</taxon>
        <taxon>Gammaproteobacteria</taxon>
        <taxon>Pseudomonadales</taxon>
        <taxon>Pseudomonadaceae</taxon>
        <taxon>Pseudomonas</taxon>
    </lineage>
</organism>
<name>ATSE4_PSEAE</name>
<reference key="1">
    <citation type="journal article" date="2000" name="Nature">
        <title>Complete genome sequence of Pseudomonas aeruginosa PAO1, an opportunistic pathogen.</title>
        <authorList>
            <person name="Stover C.K."/>
            <person name="Pham X.-Q.T."/>
            <person name="Erwin A.L."/>
            <person name="Mizoguchi S.D."/>
            <person name="Warrener P."/>
            <person name="Hickey M.J."/>
            <person name="Brinkman F.S.L."/>
            <person name="Hufnagle W.O."/>
            <person name="Kowalik D.J."/>
            <person name="Lagrou M."/>
            <person name="Garber R.L."/>
            <person name="Goltry L."/>
            <person name="Tolentino E."/>
            <person name="Westbrock-Wadman S."/>
            <person name="Yuan Y."/>
            <person name="Brody L.L."/>
            <person name="Coulter S.N."/>
            <person name="Folger K.R."/>
            <person name="Kas A."/>
            <person name="Larbig K."/>
            <person name="Lim R.M."/>
            <person name="Smith K.A."/>
            <person name="Spencer D.H."/>
            <person name="Wong G.K.-S."/>
            <person name="Wu Z."/>
            <person name="Paulsen I.T."/>
            <person name="Reizer J."/>
            <person name="Saier M.H. Jr."/>
            <person name="Hancock R.E.W."/>
            <person name="Lory S."/>
            <person name="Olson M.V."/>
        </authorList>
    </citation>
    <scope>NUCLEOTIDE SEQUENCE [LARGE SCALE GENOMIC DNA]</scope>
    <source>
        <strain>ATCC 15692 / DSM 22644 / CIP 104116 / JCM 14847 / LMG 12228 / 1C / PRS 101 / PAO1</strain>
    </source>
</reference>
<reference key="2">
    <citation type="journal article" date="2013" name="Protein Sci.">
        <title>Broad-substrate screen as a tool to identify substrates for bacterial Gcn5-related N-acetyltransferases with unknown substrate specificity.</title>
        <authorList>
            <person name="Kuhn M.L."/>
            <person name="Majorek K.A."/>
            <person name="Minor W."/>
            <person name="Anderson W.F."/>
        </authorList>
    </citation>
    <scope>FUNCTION</scope>
    <scope>SUBSTRATE SPECIFICITY</scope>
    <source>
        <strain>ATCC 15692 / DSM 22644 / CIP 104116 / JCM 14847 / LMG 12228 / 1C / PRS 101 / PAO1</strain>
    </source>
</reference>
<gene>
    <name type="ordered locus">PA5475</name>
</gene>
<sequence length="186" mass="21001">MSNVQNASRSSAFAAVEGDHWVESLDDGRHVLIRPLREEDRERERQFINRLSPATRHFRFLGEIKEASPALLDQLMDIDYQQSMAFVALVHEDGELREVGISRYAACCEEGQCECAVTIADDYQGLGLDAVLMRHLIDVARRNGFRQMYSVDSAANRAMRDLCCALGFVGQRDPDDSTQVIHRLAL</sequence>
<keyword id="KW-0012">Acyltransferase</keyword>
<keyword id="KW-1185">Reference proteome</keyword>
<keyword id="KW-0808">Transferase</keyword>
<accession>Q9HT95</accession>
<dbReference type="EC" id="2.3.1.-"/>
<dbReference type="EMBL" id="AE004091">
    <property type="protein sequence ID" value="AAG08860.1"/>
    <property type="molecule type" value="Genomic_DNA"/>
</dbReference>
<dbReference type="PIR" id="E82961">
    <property type="entry name" value="E82961"/>
</dbReference>
<dbReference type="RefSeq" id="NP_254162.1">
    <property type="nucleotide sequence ID" value="NC_002516.2"/>
</dbReference>
<dbReference type="RefSeq" id="WP_003096934.1">
    <property type="nucleotide sequence ID" value="NZ_QZGE01000012.1"/>
</dbReference>
<dbReference type="SMR" id="Q9HT95"/>
<dbReference type="STRING" id="208964.PA5475"/>
<dbReference type="PaxDb" id="208964-PA5475"/>
<dbReference type="DNASU" id="878199"/>
<dbReference type="GeneID" id="878199"/>
<dbReference type="KEGG" id="pae:PA5475"/>
<dbReference type="PATRIC" id="fig|208964.12.peg.5739"/>
<dbReference type="PseudoCAP" id="PA5475"/>
<dbReference type="HOGENOM" id="CLU_105788_0_0_6"/>
<dbReference type="InParanoid" id="Q9HT95"/>
<dbReference type="OrthoDB" id="9807426at2"/>
<dbReference type="PhylomeDB" id="Q9HT95"/>
<dbReference type="BioCyc" id="PAER208964:G1FZ6-5603-MONOMER"/>
<dbReference type="Proteomes" id="UP000002438">
    <property type="component" value="Chromosome"/>
</dbReference>
<dbReference type="GO" id="GO:0016747">
    <property type="term" value="F:acyltransferase activity, transferring groups other than amino-acyl groups"/>
    <property type="evidence" value="ECO:0000314"/>
    <property type="project" value="UniProtKB"/>
</dbReference>
<dbReference type="Gene3D" id="3.40.630.30">
    <property type="match status" value="1"/>
</dbReference>
<dbReference type="InterPro" id="IPR016181">
    <property type="entry name" value="Acyl_CoA_acyltransferase"/>
</dbReference>
<dbReference type="InterPro" id="IPR000182">
    <property type="entry name" value="GNAT_dom"/>
</dbReference>
<dbReference type="Pfam" id="PF00583">
    <property type="entry name" value="Acetyltransf_1"/>
    <property type="match status" value="1"/>
</dbReference>
<dbReference type="SUPFAM" id="SSF55729">
    <property type="entry name" value="Acyl-CoA N-acyltransferases (Nat)"/>
    <property type="match status" value="1"/>
</dbReference>
<dbReference type="PROSITE" id="PS51186">
    <property type="entry name" value="GNAT"/>
    <property type="match status" value="1"/>
</dbReference>
<comment type="function">
    <text evidence="3">Catalyzes the transfer of an acetyl group from acetyl coenzyme A (AcCoA) to an acceptor substrate and releases both CoA and the acetylated product. It prefers the antibiotic chloramphenicol.</text>
</comment>
<feature type="chain" id="PRO_0000433350" description="Acetyltransferase PA5475">
    <location>
        <begin position="1"/>
        <end position="186"/>
    </location>
</feature>
<feature type="domain" description="N-acetyltransferase" evidence="2">
    <location>
        <begin position="31"/>
        <end position="186"/>
    </location>
</feature>
<feature type="binding site" evidence="1">
    <location>
        <begin position="117"/>
        <end position="119"/>
    </location>
    <ligand>
        <name>CoA</name>
        <dbReference type="ChEBI" id="CHEBI:57287"/>
    </ligand>
</feature>
<feature type="binding site" evidence="1">
    <location>
        <position position="125"/>
    </location>
    <ligand>
        <name>CoA</name>
        <dbReference type="ChEBI" id="CHEBI:57287"/>
    </ligand>
</feature>
<feature type="binding site" evidence="1">
    <location>
        <position position="156"/>
    </location>
    <ligand>
        <name>CoA</name>
        <dbReference type="ChEBI" id="CHEBI:57287"/>
    </ligand>
</feature>
<feature type="binding site" evidence="1">
    <location>
        <begin position="161"/>
        <end position="163"/>
    </location>
    <ligand>
        <name>CoA</name>
        <dbReference type="ChEBI" id="CHEBI:57287"/>
    </ligand>
</feature>